<evidence type="ECO:0000250" key="1">
    <source>
        <dbReference type="UniProtKB" id="Q94KL8"/>
    </source>
</evidence>
<evidence type="ECO:0000269" key="2">
    <source>
    </source>
</evidence>
<evidence type="ECO:0000269" key="3">
    <source>
    </source>
</evidence>
<evidence type="ECO:0000303" key="4">
    <source>
    </source>
</evidence>
<evidence type="ECO:0000303" key="5">
    <source>
    </source>
</evidence>
<evidence type="ECO:0000303" key="6">
    <source ref="1"/>
</evidence>
<evidence type="ECO:0000305" key="7"/>
<evidence type="ECO:0000305" key="8">
    <source>
    </source>
</evidence>
<comment type="function">
    <text evidence="3">Oxidoreductase involved in lignan biosynthesis (PubMed:26359402). Also involved in the biosynthesis of etoposide, a chemotherapeutic compound of the topoisomerase inhibitor family (PubMed:26359402). Catalyzes the stereospecific conversion of (-)-secoisolariciresinol to (-)-matairesinol via a lactol intermediate (PubMed:26359402).</text>
</comment>
<comment type="catalytic activity">
    <reaction evidence="3">
        <text>(-)-secoisolariciresinol + 2 NAD(+) = (-)-matairesinol + 2 NADH + 2 H(+)</text>
        <dbReference type="Rhea" id="RHEA:33887"/>
        <dbReference type="ChEBI" id="CHEBI:6698"/>
        <dbReference type="ChEBI" id="CHEBI:15378"/>
        <dbReference type="ChEBI" id="CHEBI:57540"/>
        <dbReference type="ChEBI" id="CHEBI:57945"/>
        <dbReference type="ChEBI" id="CHEBI:65004"/>
        <dbReference type="EC" id="1.1.1.331"/>
    </reaction>
    <physiologicalReaction direction="left-to-right" evidence="3">
        <dbReference type="Rhea" id="RHEA:33888"/>
    </physiologicalReaction>
</comment>
<comment type="pathway">
    <text evidence="3">Aromatic compound metabolism; phenylpropanoid biosynthesis.</text>
</comment>
<comment type="subunit">
    <text evidence="1">Homotetramer.</text>
</comment>
<comment type="tissue specificity">
    <text evidence="2 3">Mostly expressed in stems and rhizomes, and, to a lower extent, in leaves.</text>
</comment>
<comment type="induction">
    <text evidence="2 3">Transiently induced after wounding and by jasmonic acid (MeJA) (PubMed:23653238, PubMed:26359402). After an exposition to UV-light, first transiently induced before fading out (PubMed:23653238).</text>
</comment>
<comment type="biotechnology">
    <text evidence="8">Combinatorially expression of Sinopodophyllum hexandrum (mayapple) genes of the podophyllotoxin pathway (e.g. DIR, PLR, SDH, CYP719A23, OMT3, CYP71CU1, OMT1, 2-ODD, CYP71BE54 and CYP82D61) in Nicotiana benthamiana (tobacco) results in the production of the chemotherapeutic compound etoposide.</text>
</comment>
<comment type="similarity">
    <text evidence="7">Belongs to the short-chain dehydrogenases/reductases (SDR) family.</text>
</comment>
<proteinExistence type="evidence at protein level"/>
<dbReference type="EC" id="1.1.1.331" evidence="3"/>
<dbReference type="EMBL" id="EF205022">
    <property type="protein sequence ID" value="ABN14311.1"/>
    <property type="molecule type" value="mRNA"/>
</dbReference>
<dbReference type="SMR" id="A3F5F0"/>
<dbReference type="KEGG" id="ag:ABN14311"/>
<dbReference type="BRENDA" id="1.1.1.331">
    <property type="organism ID" value="4928"/>
</dbReference>
<dbReference type="UniPathway" id="UPA00711"/>
<dbReference type="GO" id="GO:0120529">
    <property type="term" value="F:secoisolariciresinol dehydrogenase activity"/>
    <property type="evidence" value="ECO:0000314"/>
    <property type="project" value="UniProtKB"/>
</dbReference>
<dbReference type="GO" id="GO:0009807">
    <property type="term" value="P:lignan biosynthetic process"/>
    <property type="evidence" value="ECO:0000314"/>
    <property type="project" value="UniProtKB"/>
</dbReference>
<dbReference type="GO" id="GO:0009699">
    <property type="term" value="P:phenylpropanoid biosynthetic process"/>
    <property type="evidence" value="ECO:0000314"/>
    <property type="project" value="UniProtKB"/>
</dbReference>
<dbReference type="GO" id="GO:0009753">
    <property type="term" value="P:response to jasmonic acid"/>
    <property type="evidence" value="ECO:0000270"/>
    <property type="project" value="UniProtKB"/>
</dbReference>
<dbReference type="GO" id="GO:0009411">
    <property type="term" value="P:response to UV"/>
    <property type="evidence" value="ECO:0000270"/>
    <property type="project" value="UniProtKB"/>
</dbReference>
<dbReference type="GO" id="GO:0009611">
    <property type="term" value="P:response to wounding"/>
    <property type="evidence" value="ECO:0000270"/>
    <property type="project" value="UniProtKB"/>
</dbReference>
<dbReference type="CDD" id="cd05326">
    <property type="entry name" value="secoisolariciresinol-DH_like_SDR_c"/>
    <property type="match status" value="1"/>
</dbReference>
<dbReference type="FunFam" id="3.40.50.720:FF:000084">
    <property type="entry name" value="Short-chain dehydrogenase reductase"/>
    <property type="match status" value="1"/>
</dbReference>
<dbReference type="Gene3D" id="3.40.50.720">
    <property type="entry name" value="NAD(P)-binding Rossmann-like Domain"/>
    <property type="match status" value="1"/>
</dbReference>
<dbReference type="InterPro" id="IPR045309">
    <property type="entry name" value="ABA2-like"/>
</dbReference>
<dbReference type="InterPro" id="IPR036291">
    <property type="entry name" value="NAD(P)-bd_dom_sf"/>
</dbReference>
<dbReference type="InterPro" id="IPR020904">
    <property type="entry name" value="Sc_DH/Rdtase_CS"/>
</dbReference>
<dbReference type="InterPro" id="IPR002347">
    <property type="entry name" value="SDR_fam"/>
</dbReference>
<dbReference type="NCBIfam" id="NF005559">
    <property type="entry name" value="PRK07231.1"/>
    <property type="match status" value="1"/>
</dbReference>
<dbReference type="PANTHER" id="PTHR43180">
    <property type="entry name" value="3-OXOACYL-(ACYL-CARRIER-PROTEIN) REDUCTASE (AFU_ORTHOLOGUE AFUA_6G11210)"/>
    <property type="match status" value="1"/>
</dbReference>
<dbReference type="PANTHER" id="PTHR43180:SF45">
    <property type="entry name" value="SECOISOLARICIRESINOL DEHYDROGENASE-LIKE ISOFORM X1"/>
    <property type="match status" value="1"/>
</dbReference>
<dbReference type="Pfam" id="PF13561">
    <property type="entry name" value="adh_short_C2"/>
    <property type="match status" value="1"/>
</dbReference>
<dbReference type="PRINTS" id="PR00081">
    <property type="entry name" value="GDHRDH"/>
</dbReference>
<dbReference type="PRINTS" id="PR00080">
    <property type="entry name" value="SDRFAMILY"/>
</dbReference>
<dbReference type="SUPFAM" id="SSF51735">
    <property type="entry name" value="NAD(P)-binding Rossmann-fold domains"/>
    <property type="match status" value="1"/>
</dbReference>
<dbReference type="PROSITE" id="PS00061">
    <property type="entry name" value="ADH_SHORT"/>
    <property type="match status" value="1"/>
</dbReference>
<feature type="chain" id="PRO_0000451900" description="Secoisolariciresinol dehydrogenase">
    <location>
        <begin position="1"/>
        <end position="278"/>
    </location>
</feature>
<feature type="active site" description="Proton donor/acceptor" evidence="1">
    <location>
        <position position="167"/>
    </location>
</feature>
<feature type="binding site" evidence="1">
    <location>
        <begin position="23"/>
        <end position="28"/>
    </location>
    <ligand>
        <name>NAD(+)</name>
        <dbReference type="ChEBI" id="CHEBI:57540"/>
    </ligand>
</feature>
<feature type="binding site" evidence="1">
    <location>
        <position position="47"/>
    </location>
    <ligand>
        <name>NAD(+)</name>
        <dbReference type="ChEBI" id="CHEBI:57540"/>
    </ligand>
</feature>
<feature type="binding site" evidence="1">
    <location>
        <position position="73"/>
    </location>
    <ligand>
        <name>NAD(+)</name>
        <dbReference type="ChEBI" id="CHEBI:57540"/>
    </ligand>
</feature>
<feature type="binding site" evidence="1">
    <location>
        <position position="99"/>
    </location>
    <ligand>
        <name>NAD(+)</name>
        <dbReference type="ChEBI" id="CHEBI:57540"/>
    </ligand>
</feature>
<feature type="binding site" evidence="1">
    <location>
        <position position="104"/>
    </location>
    <ligand>
        <name>substrate</name>
    </ligand>
</feature>
<feature type="binding site" evidence="1">
    <location>
        <position position="164"/>
    </location>
    <ligand>
        <name>substrate</name>
    </ligand>
</feature>
<feature type="binding site" evidence="1">
    <location>
        <position position="171"/>
    </location>
    <ligand>
        <name>NAD(+)</name>
        <dbReference type="ChEBI" id="CHEBI:57540"/>
    </ligand>
</feature>
<feature type="binding site" evidence="1">
    <location>
        <position position="200"/>
    </location>
    <ligand>
        <name>NAD(+)</name>
        <dbReference type="ChEBI" id="CHEBI:57540"/>
    </ligand>
</feature>
<organism>
    <name type="scientific">Sinopodophyllum hexandrum</name>
    <name type="common">Himalayan may apple</name>
    <name type="synonym">Podophyllum hexandrum</name>
    <dbReference type="NCBI Taxonomy" id="93608"/>
    <lineage>
        <taxon>Eukaryota</taxon>
        <taxon>Viridiplantae</taxon>
        <taxon>Streptophyta</taxon>
        <taxon>Embryophyta</taxon>
        <taxon>Tracheophyta</taxon>
        <taxon>Spermatophyta</taxon>
        <taxon>Magnoliopsida</taxon>
        <taxon>Ranunculales</taxon>
        <taxon>Berberidaceae</taxon>
        <taxon>Podophylloideae</taxon>
        <taxon>Podophylleae</taxon>
        <taxon>Sinopodophyllum</taxon>
    </lineage>
</organism>
<protein>
    <recommendedName>
        <fullName evidence="4 6">Secoisolariciresinol dehydrogenase</fullName>
        <shortName evidence="4">PhSDH</shortName>
        <ecNumber evidence="3">1.1.1.331</ecNumber>
    </recommendedName>
</protein>
<accession>A3F5F0</accession>
<name>SDH_SINHE</name>
<keyword id="KW-0520">NAD</keyword>
<keyword id="KW-0560">Oxidoreductase</keyword>
<gene>
    <name evidence="4 6" type="primary">SDH</name>
    <name evidence="5" type="synonym">Phex30828</name>
</gene>
<sequence>MGSTSTPASSTNRLQDKVAIITGGAGGIGETTAKLFVRYGAKVVIADISDDHGQKVCNNIGSPDVISFVHCDVTKDEDVRNLVDTTIAKHGKLDIMFGNVGVLSTTPYSILEAGNEDFKRVMDINVYGAFLVAKHAARVMIPAKKGSIVFTASISSFTAGEGVSHVYTATKHAVLGLTTSLCTELGQHGIRVNCVSPYVVASPLLTDVFGVDSSRVEELAHQAANLKGILLRAEDVADAVAYLAGDESKYVSGLNLVIDGGYTRTNPAFPTALKHGLA</sequence>
<reference key="1">
    <citation type="submission" date="2007-01" db="EMBL/GenBank/DDBJ databases">
        <title>Secoisolariciresinol dehydrogenase from Podophyllum hexandrum Royle.</title>
        <authorList>
            <person name="Wankhade D.P."/>
            <person name="Sen J."/>
            <person name="Sinha A.K."/>
        </authorList>
    </citation>
    <scope>NUCLEOTIDE SEQUENCE [MRNA]</scope>
</reference>
<reference key="2">
    <citation type="journal article" date="2013" name="Protoplasma">
        <title>Expressed sequence tags and molecular cloning and characterization of gene encoding pinoresinol/lariciresinol reductase from Podophyllum hexandrum.</title>
        <authorList>
            <person name="Wankhede D.P."/>
            <person name="Biswas D.K."/>
            <person name="Rajkumar S."/>
            <person name="Sinha A.K."/>
        </authorList>
    </citation>
    <scope>TISSUE SPECIFICITY</scope>
    <scope>INDUCTION BY WOUNDING; UV-LIGHT AND JASMONIC ACID</scope>
</reference>
<reference key="3">
    <citation type="journal article" date="2015" name="Science">
        <title>Six enzymes from mayapple that complete the biosynthetic pathway to the etoposide aglycone.</title>
        <authorList>
            <person name="Lau W."/>
            <person name="Sattely E.S."/>
        </authorList>
    </citation>
    <scope>FUNCTION</scope>
    <scope>CATALYTIC ACTIVITY</scope>
    <scope>BIOTECHNOLOGY</scope>
    <scope>TISSUE SPECIFICITY</scope>
    <scope>INDUCTION BY WOUNDING</scope>
    <scope>PATHWAY</scope>
</reference>